<accession>Q3JBZ6</accession>
<name>IHFA_NITOC</name>
<gene>
    <name evidence="1" type="primary">ihfA</name>
    <name evidence="1" type="synonym">himA</name>
    <name type="ordered locus">Noc_1146</name>
</gene>
<reference key="1">
    <citation type="journal article" date="2006" name="Appl. Environ. Microbiol.">
        <title>Complete genome sequence of the marine, chemolithoautotrophic, ammonia-oxidizing bacterium Nitrosococcus oceani ATCC 19707.</title>
        <authorList>
            <person name="Klotz M.G."/>
            <person name="Arp D.J."/>
            <person name="Chain P.S.G."/>
            <person name="El-Sheikh A.F."/>
            <person name="Hauser L.J."/>
            <person name="Hommes N.G."/>
            <person name="Larimer F.W."/>
            <person name="Malfatti S.A."/>
            <person name="Norton J.M."/>
            <person name="Poret-Peterson A.T."/>
            <person name="Vergez L.M."/>
            <person name="Ward B.B."/>
        </authorList>
    </citation>
    <scope>NUCLEOTIDE SEQUENCE [LARGE SCALE GENOMIC DNA]</scope>
    <source>
        <strain>ATCC 19707 / BCRC 17464 / JCM 30415 / NCIMB 11848 / C-107</strain>
    </source>
</reference>
<evidence type="ECO:0000255" key="1">
    <source>
        <dbReference type="HAMAP-Rule" id="MF_00380"/>
    </source>
</evidence>
<comment type="function">
    <text evidence="1">This protein is one of the two subunits of integration host factor, a specific DNA-binding protein that functions in genetic recombination as well as in transcriptional and translational control.</text>
</comment>
<comment type="subunit">
    <text evidence="1">Heterodimer of an alpha and a beta chain.</text>
</comment>
<comment type="similarity">
    <text evidence="1">Belongs to the bacterial histone-like protein family.</text>
</comment>
<keyword id="KW-0233">DNA recombination</keyword>
<keyword id="KW-0238">DNA-binding</keyword>
<keyword id="KW-1185">Reference proteome</keyword>
<keyword id="KW-0804">Transcription</keyword>
<keyword id="KW-0805">Transcription regulation</keyword>
<keyword id="KW-0810">Translation regulation</keyword>
<proteinExistence type="inferred from homology"/>
<dbReference type="EMBL" id="CP000127">
    <property type="protein sequence ID" value="ABA57650.1"/>
    <property type="molecule type" value="Genomic_DNA"/>
</dbReference>
<dbReference type="RefSeq" id="WP_002811111.1">
    <property type="nucleotide sequence ID" value="NC_007484.1"/>
</dbReference>
<dbReference type="SMR" id="Q3JBZ6"/>
<dbReference type="FunCoup" id="Q3JBZ6">
    <property type="interactions" value="194"/>
</dbReference>
<dbReference type="STRING" id="323261.Noc_1146"/>
<dbReference type="KEGG" id="noc:Noc_1146"/>
<dbReference type="eggNOG" id="COG0776">
    <property type="taxonomic scope" value="Bacteria"/>
</dbReference>
<dbReference type="HOGENOM" id="CLU_105066_1_3_6"/>
<dbReference type="InParanoid" id="Q3JBZ6"/>
<dbReference type="Proteomes" id="UP000006838">
    <property type="component" value="Chromosome"/>
</dbReference>
<dbReference type="GO" id="GO:0005829">
    <property type="term" value="C:cytosol"/>
    <property type="evidence" value="ECO:0007669"/>
    <property type="project" value="TreeGrafter"/>
</dbReference>
<dbReference type="GO" id="GO:0003677">
    <property type="term" value="F:DNA binding"/>
    <property type="evidence" value="ECO:0007669"/>
    <property type="project" value="UniProtKB-UniRule"/>
</dbReference>
<dbReference type="GO" id="GO:0030527">
    <property type="term" value="F:structural constituent of chromatin"/>
    <property type="evidence" value="ECO:0007669"/>
    <property type="project" value="InterPro"/>
</dbReference>
<dbReference type="GO" id="GO:0006310">
    <property type="term" value="P:DNA recombination"/>
    <property type="evidence" value="ECO:0007669"/>
    <property type="project" value="UniProtKB-UniRule"/>
</dbReference>
<dbReference type="GO" id="GO:0009893">
    <property type="term" value="P:positive regulation of metabolic process"/>
    <property type="evidence" value="ECO:0007669"/>
    <property type="project" value="UniProtKB-ARBA"/>
</dbReference>
<dbReference type="GO" id="GO:0006355">
    <property type="term" value="P:regulation of DNA-templated transcription"/>
    <property type="evidence" value="ECO:0007669"/>
    <property type="project" value="UniProtKB-UniRule"/>
</dbReference>
<dbReference type="GO" id="GO:0006417">
    <property type="term" value="P:regulation of translation"/>
    <property type="evidence" value="ECO:0007669"/>
    <property type="project" value="UniProtKB-UniRule"/>
</dbReference>
<dbReference type="CDD" id="cd13835">
    <property type="entry name" value="IHF_A"/>
    <property type="match status" value="1"/>
</dbReference>
<dbReference type="FunFam" id="4.10.520.10:FF:000002">
    <property type="entry name" value="Integration host factor subunit alpha"/>
    <property type="match status" value="1"/>
</dbReference>
<dbReference type="Gene3D" id="4.10.520.10">
    <property type="entry name" value="IHF-like DNA-binding proteins"/>
    <property type="match status" value="1"/>
</dbReference>
<dbReference type="HAMAP" id="MF_00380">
    <property type="entry name" value="IHF_alpha"/>
    <property type="match status" value="1"/>
</dbReference>
<dbReference type="InterPro" id="IPR000119">
    <property type="entry name" value="Hist_DNA-bd"/>
</dbReference>
<dbReference type="InterPro" id="IPR020816">
    <property type="entry name" value="Histone-like_DNA-bd_CS"/>
</dbReference>
<dbReference type="InterPro" id="IPR010992">
    <property type="entry name" value="IHF-like_DNA-bd_dom_sf"/>
</dbReference>
<dbReference type="InterPro" id="IPR005684">
    <property type="entry name" value="IHF_alpha"/>
</dbReference>
<dbReference type="NCBIfam" id="TIGR00987">
    <property type="entry name" value="himA"/>
    <property type="match status" value="1"/>
</dbReference>
<dbReference type="NCBIfam" id="NF001401">
    <property type="entry name" value="PRK00285.1"/>
    <property type="match status" value="1"/>
</dbReference>
<dbReference type="PANTHER" id="PTHR33175">
    <property type="entry name" value="DNA-BINDING PROTEIN HU"/>
    <property type="match status" value="1"/>
</dbReference>
<dbReference type="PANTHER" id="PTHR33175:SF2">
    <property type="entry name" value="INTEGRATION HOST FACTOR SUBUNIT ALPHA"/>
    <property type="match status" value="1"/>
</dbReference>
<dbReference type="Pfam" id="PF00216">
    <property type="entry name" value="Bac_DNA_binding"/>
    <property type="match status" value="1"/>
</dbReference>
<dbReference type="PRINTS" id="PR01727">
    <property type="entry name" value="DNABINDINGHU"/>
</dbReference>
<dbReference type="SMART" id="SM00411">
    <property type="entry name" value="BHL"/>
    <property type="match status" value="1"/>
</dbReference>
<dbReference type="SUPFAM" id="SSF47729">
    <property type="entry name" value="IHF-like DNA-binding proteins"/>
    <property type="match status" value="1"/>
</dbReference>
<dbReference type="PROSITE" id="PS00045">
    <property type="entry name" value="HISTONE_LIKE"/>
    <property type="match status" value="1"/>
</dbReference>
<organism>
    <name type="scientific">Nitrosococcus oceani (strain ATCC 19707 / BCRC 17464 / JCM 30415 / NCIMB 11848 / C-107)</name>
    <dbReference type="NCBI Taxonomy" id="323261"/>
    <lineage>
        <taxon>Bacteria</taxon>
        <taxon>Pseudomonadati</taxon>
        <taxon>Pseudomonadota</taxon>
        <taxon>Gammaproteobacteria</taxon>
        <taxon>Chromatiales</taxon>
        <taxon>Chromatiaceae</taxon>
        <taxon>Nitrosococcus</taxon>
    </lineage>
</organism>
<sequence>MALTKADMTETLYQELGLNKREAKEIVEMFFEDIRCALEQGEAVKLSGFGNFELRDKGERPGRNPKTGEEIPITARRVVTFRPGQKLKARVEAYAGGKQ</sequence>
<protein>
    <recommendedName>
        <fullName evidence="1">Integration host factor subunit alpha</fullName>
        <shortName evidence="1">IHF-alpha</shortName>
    </recommendedName>
</protein>
<feature type="chain" id="PRO_0000277748" description="Integration host factor subunit alpha">
    <location>
        <begin position="1"/>
        <end position="99"/>
    </location>
</feature>